<dbReference type="EMBL" id="AK001192">
    <property type="protein sequence ID" value="BAA91546.1"/>
    <property type="molecule type" value="mRNA"/>
</dbReference>
<dbReference type="EMBL" id="AL160171">
    <property type="status" value="NOT_ANNOTATED_CDS"/>
    <property type="molecule type" value="Genomic_DNA"/>
</dbReference>
<dbReference type="EMBL" id="AL591719">
    <property type="status" value="NOT_ANNOTATED_CDS"/>
    <property type="molecule type" value="Genomic_DNA"/>
</dbReference>
<dbReference type="EMBL" id="BC007757">
    <property type="protein sequence ID" value="AAH07757.1"/>
    <property type="status" value="ALT_TERM"/>
    <property type="molecule type" value="mRNA"/>
</dbReference>
<dbReference type="EMBL" id="BC016296">
    <property type="protein sequence ID" value="AAH16296.1"/>
    <property type="status" value="ALT_TERM"/>
    <property type="molecule type" value="mRNA"/>
</dbReference>
<dbReference type="EMBL" id="BC024275">
    <property type="protein sequence ID" value="AAH24275.1"/>
    <property type="status" value="ALT_TERM"/>
    <property type="molecule type" value="mRNA"/>
</dbReference>
<dbReference type="EMBL" id="BC040127">
    <property type="protein sequence ID" value="AAH40127.1"/>
    <property type="status" value="ALT_TERM"/>
    <property type="molecule type" value="mRNA"/>
</dbReference>
<dbReference type="EMBL" id="BC053838">
    <property type="protein sequence ID" value="AAH53838.1"/>
    <property type="molecule type" value="mRNA"/>
</dbReference>
<dbReference type="EMBL" id="BC107801">
    <property type="protein sequence ID" value="AAI07802.1"/>
    <property type="status" value="ALT_TERM"/>
    <property type="molecule type" value="mRNA"/>
</dbReference>
<dbReference type="EMBL" id="BC130346">
    <property type="protein sequence ID" value="AAI30347.1"/>
    <property type="molecule type" value="mRNA"/>
</dbReference>
<dbReference type="EMBL" id="BC132963">
    <property type="protein sequence ID" value="AAI32964.1"/>
    <property type="molecule type" value="mRNA"/>
</dbReference>
<dbReference type="EMBL" id="AY211915">
    <property type="protein sequence ID" value="AAO65168.1"/>
    <property type="status" value="ALT_INIT"/>
    <property type="molecule type" value="mRNA"/>
</dbReference>
<dbReference type="CCDS" id="CCDS788.1">
    <molecule id="Q5VTL8-1"/>
</dbReference>
<dbReference type="RefSeq" id="NP_060531.2">
    <molecule id="Q5VTL8-1"/>
    <property type="nucleotide sequence ID" value="NM_018061.4"/>
</dbReference>
<dbReference type="SMR" id="Q5VTL8"/>
<dbReference type="BioGRID" id="120428">
    <property type="interactions" value="122"/>
</dbReference>
<dbReference type="FunCoup" id="Q5VTL8">
    <property type="interactions" value="413"/>
</dbReference>
<dbReference type="IntAct" id="Q5VTL8">
    <property type="interactions" value="65"/>
</dbReference>
<dbReference type="MINT" id="Q5VTL8"/>
<dbReference type="STRING" id="9606.ENSP00000359042"/>
<dbReference type="GlyGen" id="Q5VTL8">
    <property type="glycosylation" value="1 site, 1 O-linked glycan (1 site)"/>
</dbReference>
<dbReference type="iPTMnet" id="Q5VTL8"/>
<dbReference type="PhosphoSitePlus" id="Q5VTL8"/>
<dbReference type="SwissPalm" id="Q5VTL8"/>
<dbReference type="BioMuta" id="PRPF38B"/>
<dbReference type="DMDM" id="74746965"/>
<dbReference type="jPOST" id="Q5VTL8"/>
<dbReference type="MassIVE" id="Q5VTL8"/>
<dbReference type="PaxDb" id="9606-ENSP00000359042"/>
<dbReference type="PeptideAtlas" id="Q5VTL8"/>
<dbReference type="ProteomicsDB" id="65335">
    <molecule id="Q5VTL8-1"/>
</dbReference>
<dbReference type="ProteomicsDB" id="65336">
    <molecule id="Q5VTL8-2"/>
</dbReference>
<dbReference type="Pumba" id="Q5VTL8"/>
<dbReference type="Antibodypedia" id="53741">
    <property type="antibodies" value="26 antibodies from 14 providers"/>
</dbReference>
<dbReference type="DNASU" id="55119"/>
<dbReference type="Ensembl" id="ENST00000370022.9">
    <molecule id="Q5VTL8-2"/>
    <property type="protein sequence ID" value="ENSP00000359039.5"/>
    <property type="gene ID" value="ENSG00000134186.12"/>
</dbReference>
<dbReference type="Ensembl" id="ENST00000370025.9">
    <molecule id="Q5VTL8-1"/>
    <property type="protein sequence ID" value="ENSP00000359042.4"/>
    <property type="gene ID" value="ENSG00000134186.12"/>
</dbReference>
<dbReference type="GeneID" id="55119"/>
<dbReference type="KEGG" id="hsa:55119"/>
<dbReference type="MANE-Select" id="ENST00000370025.9">
    <property type="protein sequence ID" value="ENSP00000359042.4"/>
    <property type="RefSeq nucleotide sequence ID" value="NM_018061.4"/>
    <property type="RefSeq protein sequence ID" value="NP_060531.2"/>
</dbReference>
<dbReference type="UCSC" id="uc001dvv.5">
    <molecule id="Q5VTL8-1"/>
    <property type="organism name" value="human"/>
</dbReference>
<dbReference type="AGR" id="HGNC:25512"/>
<dbReference type="CTD" id="55119"/>
<dbReference type="DisGeNET" id="55119"/>
<dbReference type="GeneCards" id="PRPF38B"/>
<dbReference type="HGNC" id="HGNC:25512">
    <property type="gene designation" value="PRPF38B"/>
</dbReference>
<dbReference type="HPA" id="ENSG00000134186">
    <property type="expression patterns" value="Low tissue specificity"/>
</dbReference>
<dbReference type="neXtProt" id="NX_Q5VTL8"/>
<dbReference type="OpenTargets" id="ENSG00000134186"/>
<dbReference type="PharmGKB" id="PA142671126"/>
<dbReference type="VEuPathDB" id="HostDB:ENSG00000134186"/>
<dbReference type="eggNOG" id="KOG2888">
    <property type="taxonomic scope" value="Eukaryota"/>
</dbReference>
<dbReference type="GeneTree" id="ENSGT01120000271945"/>
<dbReference type="HOGENOM" id="CLU_034151_1_2_1"/>
<dbReference type="InParanoid" id="Q5VTL8"/>
<dbReference type="OMA" id="ERSHKHD"/>
<dbReference type="OrthoDB" id="3881at2759"/>
<dbReference type="PAN-GO" id="Q5VTL8">
    <property type="GO annotations" value="1 GO annotation based on evolutionary models"/>
</dbReference>
<dbReference type="PhylomeDB" id="Q5VTL8"/>
<dbReference type="TreeFam" id="TF313626"/>
<dbReference type="PathwayCommons" id="Q5VTL8"/>
<dbReference type="SignaLink" id="Q5VTL8"/>
<dbReference type="BioGRID-ORCS" id="55119">
    <property type="hits" value="838 hits in 1183 CRISPR screens"/>
</dbReference>
<dbReference type="ChiTaRS" id="PRPF38B">
    <property type="organism name" value="human"/>
</dbReference>
<dbReference type="GenomeRNAi" id="55119"/>
<dbReference type="Pharos" id="Q5VTL8">
    <property type="development level" value="Tdark"/>
</dbReference>
<dbReference type="PRO" id="PR:Q5VTL8"/>
<dbReference type="Proteomes" id="UP000005640">
    <property type="component" value="Chromosome 1"/>
</dbReference>
<dbReference type="RNAct" id="Q5VTL8">
    <property type="molecule type" value="protein"/>
</dbReference>
<dbReference type="Bgee" id="ENSG00000134186">
    <property type="expression patterns" value="Expressed in trabecular bone tissue and 190 other cell types or tissues"/>
</dbReference>
<dbReference type="ExpressionAtlas" id="Q5VTL8">
    <property type="expression patterns" value="baseline and differential"/>
</dbReference>
<dbReference type="GO" id="GO:0071011">
    <property type="term" value="C:precatalytic spliceosome"/>
    <property type="evidence" value="ECO:0000318"/>
    <property type="project" value="GO_Central"/>
</dbReference>
<dbReference type="GO" id="GO:0003723">
    <property type="term" value="F:RNA binding"/>
    <property type="evidence" value="ECO:0007005"/>
    <property type="project" value="UniProtKB"/>
</dbReference>
<dbReference type="GO" id="GO:0006397">
    <property type="term" value="P:mRNA processing"/>
    <property type="evidence" value="ECO:0007669"/>
    <property type="project" value="UniProtKB-KW"/>
</dbReference>
<dbReference type="GO" id="GO:0008380">
    <property type="term" value="P:RNA splicing"/>
    <property type="evidence" value="ECO:0007669"/>
    <property type="project" value="UniProtKB-KW"/>
</dbReference>
<dbReference type="InterPro" id="IPR005037">
    <property type="entry name" value="PRP38"/>
</dbReference>
<dbReference type="PANTHER" id="PTHR23142">
    <property type="entry name" value="PRE-MRNA-SPLICING FACTOR 38A-RELATED"/>
    <property type="match status" value="1"/>
</dbReference>
<dbReference type="Pfam" id="PF03371">
    <property type="entry name" value="PRP38"/>
    <property type="match status" value="1"/>
</dbReference>
<feature type="initiator methionine" description="Removed" evidence="8">
    <location>
        <position position="1"/>
    </location>
</feature>
<feature type="chain" id="PRO_0000287235" description="Pre-mRNA-splicing factor 38B">
    <location>
        <begin position="2"/>
        <end position="546"/>
    </location>
</feature>
<feature type="region of interest" description="Disordered" evidence="3">
    <location>
        <begin position="1"/>
        <end position="40"/>
    </location>
</feature>
<feature type="region of interest" description="Disordered" evidence="3">
    <location>
        <begin position="229"/>
        <end position="546"/>
    </location>
</feature>
<feature type="coiled-coil region" evidence="2">
    <location>
        <begin position="292"/>
        <end position="321"/>
    </location>
</feature>
<feature type="compositionally biased region" description="Polar residues" evidence="3">
    <location>
        <begin position="1"/>
        <end position="14"/>
    </location>
</feature>
<feature type="compositionally biased region" description="Low complexity" evidence="3">
    <location>
        <begin position="15"/>
        <end position="28"/>
    </location>
</feature>
<feature type="compositionally biased region" description="Basic and acidic residues" evidence="3">
    <location>
        <begin position="243"/>
        <end position="255"/>
    </location>
</feature>
<feature type="compositionally biased region" description="Basic residues" evidence="3">
    <location>
        <begin position="256"/>
        <end position="284"/>
    </location>
</feature>
<feature type="compositionally biased region" description="Basic and acidic residues" evidence="3">
    <location>
        <begin position="291"/>
        <end position="327"/>
    </location>
</feature>
<feature type="compositionally biased region" description="Basic residues" evidence="3">
    <location>
        <begin position="328"/>
        <end position="344"/>
    </location>
</feature>
<feature type="compositionally biased region" description="Basic and acidic residues" evidence="3">
    <location>
        <begin position="345"/>
        <end position="421"/>
    </location>
</feature>
<feature type="compositionally biased region" description="Basic residues" evidence="3">
    <location>
        <begin position="422"/>
        <end position="450"/>
    </location>
</feature>
<feature type="compositionally biased region" description="Basic and acidic residues" evidence="3">
    <location>
        <begin position="451"/>
        <end position="468"/>
    </location>
</feature>
<feature type="compositionally biased region" description="Basic and acidic residues" evidence="3">
    <location>
        <begin position="480"/>
        <end position="495"/>
    </location>
</feature>
<feature type="compositionally biased region" description="Basic residues" evidence="3">
    <location>
        <begin position="496"/>
        <end position="510"/>
    </location>
</feature>
<feature type="compositionally biased region" description="Basic and acidic residues" evidence="3">
    <location>
        <begin position="511"/>
        <end position="546"/>
    </location>
</feature>
<feature type="modified residue" description="N-acetylalanine" evidence="8">
    <location>
        <position position="2"/>
    </location>
</feature>
<feature type="modified residue" description="Phosphoserine" evidence="1">
    <location>
        <position position="5"/>
    </location>
</feature>
<feature type="modified residue" description="N6-acetyllysine" evidence="9">
    <location>
        <position position="227"/>
    </location>
</feature>
<feature type="modified residue" description="Phosphoserine" evidence="12">
    <location>
        <position position="288"/>
    </location>
</feature>
<feature type="modified residue" description="Phosphoserine" evidence="12">
    <location>
        <position position="290"/>
    </location>
</feature>
<feature type="modified residue" description="Phosphoserine" evidence="12">
    <location>
        <position position="318"/>
    </location>
</feature>
<feature type="modified residue" description="Phosphoserine" evidence="11 12">
    <location>
        <position position="320"/>
    </location>
</feature>
<feature type="modified residue" description="Phosphoserine" evidence="10">
    <location>
        <position position="448"/>
    </location>
</feature>
<feature type="modified residue" description="Phosphoserine" evidence="11">
    <location>
        <position position="473"/>
    </location>
</feature>
<feature type="modified residue" description="Phosphoserine" evidence="11">
    <location>
        <position position="475"/>
    </location>
</feature>
<feature type="modified residue" description="Phosphoserine" evidence="11">
    <location>
        <position position="481"/>
    </location>
</feature>
<feature type="modified residue" description="Phosphoserine" evidence="6 7 10 11 12">
    <location>
        <position position="527"/>
    </location>
</feature>
<feature type="modified residue" description="Phosphoserine" evidence="6 7 10 11 12">
    <location>
        <position position="529"/>
    </location>
</feature>
<feature type="modified residue" description="Phosphoserine" evidence="7 10">
    <location>
        <position position="534"/>
    </location>
</feature>
<feature type="splice variant" id="VSP_025408" description="In isoform 2." evidence="4">
    <original>DLDV</original>
    <variation>FFTL</variation>
    <location>
        <begin position="187"/>
        <end position="190"/>
    </location>
</feature>
<feature type="splice variant" id="VSP_025409" description="In isoform 2." evidence="4">
    <location>
        <begin position="191"/>
        <end position="546"/>
    </location>
</feature>
<feature type="sequence conflict" description="In Ref. 1; BAA91546." evidence="5" ref="1">
    <original>N</original>
    <variation>S</variation>
    <location>
        <position position="52"/>
    </location>
</feature>
<feature type="sequence conflict" description="In Ref. 3; AAH40127." evidence="5" ref="3">
    <original>EL</original>
    <variation>DR</variation>
    <location>
        <begin position="294"/>
        <end position="295"/>
    </location>
</feature>
<accession>Q5VTL8</accession>
<accession>Q05DD6</accession>
<accession>Q32Q58</accession>
<accession>Q5VTL9</accession>
<accession>Q6PK39</accession>
<accession>Q7Z6E2</accession>
<accession>Q86WF3</accession>
<accession>Q8IWG9</accession>
<accession>Q9NW40</accession>
<protein>
    <recommendedName>
        <fullName>Pre-mRNA-splicing factor 38B</fullName>
    </recommendedName>
    <alternativeName>
        <fullName>Sarcoma antigen NY-SAR-27</fullName>
    </alternativeName>
</protein>
<keyword id="KW-0007">Acetylation</keyword>
<keyword id="KW-0025">Alternative splicing</keyword>
<keyword id="KW-0175">Coiled coil</keyword>
<keyword id="KW-0507">mRNA processing</keyword>
<keyword id="KW-0508">mRNA splicing</keyword>
<keyword id="KW-0539">Nucleus</keyword>
<keyword id="KW-0597">Phosphoprotein</keyword>
<keyword id="KW-1267">Proteomics identification</keyword>
<keyword id="KW-1185">Reference proteome</keyword>
<keyword id="KW-0747">Spliceosome</keyword>
<evidence type="ECO:0000250" key="1">
    <source>
        <dbReference type="UniProtKB" id="Q6AXY7"/>
    </source>
</evidence>
<evidence type="ECO:0000255" key="2"/>
<evidence type="ECO:0000256" key="3">
    <source>
        <dbReference type="SAM" id="MobiDB-lite"/>
    </source>
</evidence>
<evidence type="ECO:0000303" key="4">
    <source>
    </source>
</evidence>
<evidence type="ECO:0000305" key="5"/>
<evidence type="ECO:0007744" key="6">
    <source>
    </source>
</evidence>
<evidence type="ECO:0007744" key="7">
    <source>
    </source>
</evidence>
<evidence type="ECO:0007744" key="8">
    <source>
    </source>
</evidence>
<evidence type="ECO:0007744" key="9">
    <source>
    </source>
</evidence>
<evidence type="ECO:0007744" key="10">
    <source>
    </source>
</evidence>
<evidence type="ECO:0007744" key="11">
    <source>
    </source>
</evidence>
<evidence type="ECO:0007744" key="12">
    <source>
    </source>
</evidence>
<gene>
    <name type="primary">PRPF38B</name>
</gene>
<organism>
    <name type="scientific">Homo sapiens</name>
    <name type="common">Human</name>
    <dbReference type="NCBI Taxonomy" id="9606"/>
    <lineage>
        <taxon>Eukaryota</taxon>
        <taxon>Metazoa</taxon>
        <taxon>Chordata</taxon>
        <taxon>Craniata</taxon>
        <taxon>Vertebrata</taxon>
        <taxon>Euteleostomi</taxon>
        <taxon>Mammalia</taxon>
        <taxon>Eutheria</taxon>
        <taxon>Euarchontoglires</taxon>
        <taxon>Primates</taxon>
        <taxon>Haplorrhini</taxon>
        <taxon>Catarrhini</taxon>
        <taxon>Hominidae</taxon>
        <taxon>Homo</taxon>
    </lineage>
</organism>
<comment type="function">
    <text evidence="5">May be required for pre-mRNA splicing.</text>
</comment>
<comment type="subcellular location">
    <subcellularLocation>
        <location evidence="5">Nucleus</location>
    </subcellularLocation>
</comment>
<comment type="alternative products">
    <event type="alternative splicing"/>
    <isoform>
        <id>Q5VTL8-1</id>
        <name>1</name>
        <sequence type="displayed"/>
    </isoform>
    <isoform>
        <id>Q5VTL8-2</id>
        <name>2</name>
        <sequence type="described" ref="VSP_025408 VSP_025409"/>
    </isoform>
</comment>
<comment type="similarity">
    <text evidence="5">Belongs to the PRP38 family.</text>
</comment>
<comment type="sequence caution" evidence="5">
    <conflict type="erroneous initiation">
        <sequence resource="EMBL-CDS" id="AAO65168"/>
    </conflict>
</comment>
<reference key="1">
    <citation type="journal article" date="2004" name="Nat. Genet.">
        <title>Complete sequencing and characterization of 21,243 full-length human cDNAs.</title>
        <authorList>
            <person name="Ota T."/>
            <person name="Suzuki Y."/>
            <person name="Nishikawa T."/>
            <person name="Otsuki T."/>
            <person name="Sugiyama T."/>
            <person name="Irie R."/>
            <person name="Wakamatsu A."/>
            <person name="Hayashi K."/>
            <person name="Sato H."/>
            <person name="Nagai K."/>
            <person name="Kimura K."/>
            <person name="Makita H."/>
            <person name="Sekine M."/>
            <person name="Obayashi M."/>
            <person name="Nishi T."/>
            <person name="Shibahara T."/>
            <person name="Tanaka T."/>
            <person name="Ishii S."/>
            <person name="Yamamoto J."/>
            <person name="Saito K."/>
            <person name="Kawai Y."/>
            <person name="Isono Y."/>
            <person name="Nakamura Y."/>
            <person name="Nagahari K."/>
            <person name="Murakami K."/>
            <person name="Yasuda T."/>
            <person name="Iwayanagi T."/>
            <person name="Wagatsuma M."/>
            <person name="Shiratori A."/>
            <person name="Sudo H."/>
            <person name="Hosoiri T."/>
            <person name="Kaku Y."/>
            <person name="Kodaira H."/>
            <person name="Kondo H."/>
            <person name="Sugawara M."/>
            <person name="Takahashi M."/>
            <person name="Kanda K."/>
            <person name="Yokoi T."/>
            <person name="Furuya T."/>
            <person name="Kikkawa E."/>
            <person name="Omura Y."/>
            <person name="Abe K."/>
            <person name="Kamihara K."/>
            <person name="Katsuta N."/>
            <person name="Sato K."/>
            <person name="Tanikawa M."/>
            <person name="Yamazaki M."/>
            <person name="Ninomiya K."/>
            <person name="Ishibashi T."/>
            <person name="Yamashita H."/>
            <person name="Murakawa K."/>
            <person name="Fujimori K."/>
            <person name="Tanai H."/>
            <person name="Kimata M."/>
            <person name="Watanabe M."/>
            <person name="Hiraoka S."/>
            <person name="Chiba Y."/>
            <person name="Ishida S."/>
            <person name="Ono Y."/>
            <person name="Takiguchi S."/>
            <person name="Watanabe S."/>
            <person name="Yosida M."/>
            <person name="Hotuta T."/>
            <person name="Kusano J."/>
            <person name="Kanehori K."/>
            <person name="Takahashi-Fujii A."/>
            <person name="Hara H."/>
            <person name="Tanase T.-O."/>
            <person name="Nomura Y."/>
            <person name="Togiya S."/>
            <person name="Komai F."/>
            <person name="Hara R."/>
            <person name="Takeuchi K."/>
            <person name="Arita M."/>
            <person name="Imose N."/>
            <person name="Musashino K."/>
            <person name="Yuuki H."/>
            <person name="Oshima A."/>
            <person name="Sasaki N."/>
            <person name="Aotsuka S."/>
            <person name="Yoshikawa Y."/>
            <person name="Matsunawa H."/>
            <person name="Ichihara T."/>
            <person name="Shiohata N."/>
            <person name="Sano S."/>
            <person name="Moriya S."/>
            <person name="Momiyama H."/>
            <person name="Satoh N."/>
            <person name="Takami S."/>
            <person name="Terashima Y."/>
            <person name="Suzuki O."/>
            <person name="Nakagawa S."/>
            <person name="Senoh A."/>
            <person name="Mizoguchi H."/>
            <person name="Goto Y."/>
            <person name="Shimizu F."/>
            <person name="Wakebe H."/>
            <person name="Hishigaki H."/>
            <person name="Watanabe T."/>
            <person name="Sugiyama A."/>
            <person name="Takemoto M."/>
            <person name="Kawakami B."/>
            <person name="Yamazaki M."/>
            <person name="Watanabe K."/>
            <person name="Kumagai A."/>
            <person name="Itakura S."/>
            <person name="Fukuzumi Y."/>
            <person name="Fujimori Y."/>
            <person name="Komiyama M."/>
            <person name="Tashiro H."/>
            <person name="Tanigami A."/>
            <person name="Fujiwara T."/>
            <person name="Ono T."/>
            <person name="Yamada K."/>
            <person name="Fujii Y."/>
            <person name="Ozaki K."/>
            <person name="Hirao M."/>
            <person name="Ohmori Y."/>
            <person name="Kawabata A."/>
            <person name="Hikiji T."/>
            <person name="Kobatake N."/>
            <person name="Inagaki H."/>
            <person name="Ikema Y."/>
            <person name="Okamoto S."/>
            <person name="Okitani R."/>
            <person name="Kawakami T."/>
            <person name="Noguchi S."/>
            <person name="Itoh T."/>
            <person name="Shigeta K."/>
            <person name="Senba T."/>
            <person name="Matsumura K."/>
            <person name="Nakajima Y."/>
            <person name="Mizuno T."/>
            <person name="Morinaga M."/>
            <person name="Sasaki M."/>
            <person name="Togashi T."/>
            <person name="Oyama M."/>
            <person name="Hata H."/>
            <person name="Watanabe M."/>
            <person name="Komatsu T."/>
            <person name="Mizushima-Sugano J."/>
            <person name="Satoh T."/>
            <person name="Shirai Y."/>
            <person name="Takahashi Y."/>
            <person name="Nakagawa K."/>
            <person name="Okumura K."/>
            <person name="Nagase T."/>
            <person name="Nomura N."/>
            <person name="Kikuchi H."/>
            <person name="Masuho Y."/>
            <person name="Yamashita R."/>
            <person name="Nakai K."/>
            <person name="Yada T."/>
            <person name="Nakamura Y."/>
            <person name="Ohara O."/>
            <person name="Isogai T."/>
            <person name="Sugano S."/>
        </authorList>
    </citation>
    <scope>NUCLEOTIDE SEQUENCE [LARGE SCALE MRNA] (ISOFORM 1)</scope>
</reference>
<reference key="2">
    <citation type="journal article" date="2006" name="Nature">
        <title>The DNA sequence and biological annotation of human chromosome 1.</title>
        <authorList>
            <person name="Gregory S.G."/>
            <person name="Barlow K.F."/>
            <person name="McLay K.E."/>
            <person name="Kaul R."/>
            <person name="Swarbreck D."/>
            <person name="Dunham A."/>
            <person name="Scott C.E."/>
            <person name="Howe K.L."/>
            <person name="Woodfine K."/>
            <person name="Spencer C.C.A."/>
            <person name="Jones M.C."/>
            <person name="Gillson C."/>
            <person name="Searle S."/>
            <person name="Zhou Y."/>
            <person name="Kokocinski F."/>
            <person name="McDonald L."/>
            <person name="Evans R."/>
            <person name="Phillips K."/>
            <person name="Atkinson A."/>
            <person name="Cooper R."/>
            <person name="Jones C."/>
            <person name="Hall R.E."/>
            <person name="Andrews T.D."/>
            <person name="Lloyd C."/>
            <person name="Ainscough R."/>
            <person name="Almeida J.P."/>
            <person name="Ambrose K.D."/>
            <person name="Anderson F."/>
            <person name="Andrew R.W."/>
            <person name="Ashwell R.I.S."/>
            <person name="Aubin K."/>
            <person name="Babbage A.K."/>
            <person name="Bagguley C.L."/>
            <person name="Bailey J."/>
            <person name="Beasley H."/>
            <person name="Bethel G."/>
            <person name="Bird C.P."/>
            <person name="Bray-Allen S."/>
            <person name="Brown J.Y."/>
            <person name="Brown A.J."/>
            <person name="Buckley D."/>
            <person name="Burton J."/>
            <person name="Bye J."/>
            <person name="Carder C."/>
            <person name="Chapman J.C."/>
            <person name="Clark S.Y."/>
            <person name="Clarke G."/>
            <person name="Clee C."/>
            <person name="Cobley V."/>
            <person name="Collier R.E."/>
            <person name="Corby N."/>
            <person name="Coville G.J."/>
            <person name="Davies J."/>
            <person name="Deadman R."/>
            <person name="Dunn M."/>
            <person name="Earthrowl M."/>
            <person name="Ellington A.G."/>
            <person name="Errington H."/>
            <person name="Frankish A."/>
            <person name="Frankland J."/>
            <person name="French L."/>
            <person name="Garner P."/>
            <person name="Garnett J."/>
            <person name="Gay L."/>
            <person name="Ghori M.R.J."/>
            <person name="Gibson R."/>
            <person name="Gilby L.M."/>
            <person name="Gillett W."/>
            <person name="Glithero R.J."/>
            <person name="Grafham D.V."/>
            <person name="Griffiths C."/>
            <person name="Griffiths-Jones S."/>
            <person name="Grocock R."/>
            <person name="Hammond S."/>
            <person name="Harrison E.S.I."/>
            <person name="Hart E."/>
            <person name="Haugen E."/>
            <person name="Heath P.D."/>
            <person name="Holmes S."/>
            <person name="Holt K."/>
            <person name="Howden P.J."/>
            <person name="Hunt A.R."/>
            <person name="Hunt S.E."/>
            <person name="Hunter G."/>
            <person name="Isherwood J."/>
            <person name="James R."/>
            <person name="Johnson C."/>
            <person name="Johnson D."/>
            <person name="Joy A."/>
            <person name="Kay M."/>
            <person name="Kershaw J.K."/>
            <person name="Kibukawa M."/>
            <person name="Kimberley A.M."/>
            <person name="King A."/>
            <person name="Knights A.J."/>
            <person name="Lad H."/>
            <person name="Laird G."/>
            <person name="Lawlor S."/>
            <person name="Leongamornlert D.A."/>
            <person name="Lloyd D.M."/>
            <person name="Loveland J."/>
            <person name="Lovell J."/>
            <person name="Lush M.J."/>
            <person name="Lyne R."/>
            <person name="Martin S."/>
            <person name="Mashreghi-Mohammadi M."/>
            <person name="Matthews L."/>
            <person name="Matthews N.S.W."/>
            <person name="McLaren S."/>
            <person name="Milne S."/>
            <person name="Mistry S."/>
            <person name="Moore M.J.F."/>
            <person name="Nickerson T."/>
            <person name="O'Dell C.N."/>
            <person name="Oliver K."/>
            <person name="Palmeiri A."/>
            <person name="Palmer S.A."/>
            <person name="Parker A."/>
            <person name="Patel D."/>
            <person name="Pearce A.V."/>
            <person name="Peck A.I."/>
            <person name="Pelan S."/>
            <person name="Phelps K."/>
            <person name="Phillimore B.J."/>
            <person name="Plumb R."/>
            <person name="Rajan J."/>
            <person name="Raymond C."/>
            <person name="Rouse G."/>
            <person name="Saenphimmachak C."/>
            <person name="Sehra H.K."/>
            <person name="Sheridan E."/>
            <person name="Shownkeen R."/>
            <person name="Sims S."/>
            <person name="Skuce C.D."/>
            <person name="Smith M."/>
            <person name="Steward C."/>
            <person name="Subramanian S."/>
            <person name="Sycamore N."/>
            <person name="Tracey A."/>
            <person name="Tromans A."/>
            <person name="Van Helmond Z."/>
            <person name="Wall M."/>
            <person name="Wallis J.M."/>
            <person name="White S."/>
            <person name="Whitehead S.L."/>
            <person name="Wilkinson J.E."/>
            <person name="Willey D.L."/>
            <person name="Williams H."/>
            <person name="Wilming L."/>
            <person name="Wray P.W."/>
            <person name="Wu Z."/>
            <person name="Coulson A."/>
            <person name="Vaudin M."/>
            <person name="Sulston J.E."/>
            <person name="Durbin R.M."/>
            <person name="Hubbard T."/>
            <person name="Wooster R."/>
            <person name="Dunham I."/>
            <person name="Carter N.P."/>
            <person name="McVean G."/>
            <person name="Ross M.T."/>
            <person name="Harrow J."/>
            <person name="Olson M.V."/>
            <person name="Beck S."/>
            <person name="Rogers J."/>
            <person name="Bentley D.R."/>
        </authorList>
    </citation>
    <scope>NUCLEOTIDE SEQUENCE [LARGE SCALE GENOMIC DNA]</scope>
</reference>
<reference key="3">
    <citation type="journal article" date="2004" name="Genome Res.">
        <title>The status, quality, and expansion of the NIH full-length cDNA project: the Mammalian Gene Collection (MGC).</title>
        <authorList>
            <consortium name="The MGC Project Team"/>
        </authorList>
    </citation>
    <scope>NUCLEOTIDE SEQUENCE [LARGE SCALE MRNA] (ISOFORMS 1 AND 2)</scope>
    <source>
        <tissue>Lung</tissue>
        <tissue>Muscle</tissue>
        <tissue>Skin</tissue>
        <tissue>Testis</tissue>
    </source>
</reference>
<reference key="4">
    <citation type="journal article" date="2003" name="Proc. Natl. Acad. Sci. U.S.A.">
        <title>Immunomic analysis of human sarcoma.</title>
        <authorList>
            <person name="Lee S.-Y."/>
            <person name="Obata Y."/>
            <person name="Yoshida M."/>
            <person name="Stockert E."/>
            <person name="Williamson B."/>
            <person name="Jungbluth A.A."/>
            <person name="Chen Y.-T."/>
            <person name="Old L.J."/>
            <person name="Scanlan M.J."/>
        </authorList>
    </citation>
    <scope>NUCLEOTIDE SEQUENCE [MRNA] OF 402-546 (ISOFORM 1)</scope>
</reference>
<reference key="5">
    <citation type="journal article" date="2006" name="Cell">
        <title>Global, in vivo, and site-specific phosphorylation dynamics in signaling networks.</title>
        <authorList>
            <person name="Olsen J.V."/>
            <person name="Blagoev B."/>
            <person name="Gnad F."/>
            <person name="Macek B."/>
            <person name="Kumar C."/>
            <person name="Mortensen P."/>
            <person name="Mann M."/>
        </authorList>
    </citation>
    <scope>IDENTIFICATION BY MASS SPECTROMETRY [LARGE SCALE ANALYSIS]</scope>
    <source>
        <tissue>Cervix carcinoma</tissue>
    </source>
</reference>
<reference key="6">
    <citation type="journal article" date="2006" name="Nat. Biotechnol.">
        <title>A probability-based approach for high-throughput protein phosphorylation analysis and site localization.</title>
        <authorList>
            <person name="Beausoleil S.A."/>
            <person name="Villen J."/>
            <person name="Gerber S.A."/>
            <person name="Rush J."/>
            <person name="Gygi S.P."/>
        </authorList>
    </citation>
    <scope>PHOSPHORYLATION [LARGE SCALE ANALYSIS] AT SER-527 AND SER-529</scope>
    <scope>IDENTIFICATION BY MASS SPECTROMETRY [LARGE SCALE ANALYSIS]</scope>
    <source>
        <tissue>Cervix carcinoma</tissue>
    </source>
</reference>
<reference key="7">
    <citation type="journal article" date="2008" name="Proc. Natl. Acad. Sci. U.S.A.">
        <title>A quantitative atlas of mitotic phosphorylation.</title>
        <authorList>
            <person name="Dephoure N."/>
            <person name="Zhou C."/>
            <person name="Villen J."/>
            <person name="Beausoleil S.A."/>
            <person name="Bakalarski C.E."/>
            <person name="Elledge S.J."/>
            <person name="Gygi S.P."/>
        </authorList>
    </citation>
    <scope>PHOSPHORYLATION [LARGE SCALE ANALYSIS] AT SER-527; SER-529 AND SER-534</scope>
    <scope>IDENTIFICATION BY MASS SPECTROMETRY [LARGE SCALE ANALYSIS]</scope>
    <source>
        <tissue>Cervix carcinoma</tissue>
    </source>
</reference>
<reference key="8">
    <citation type="journal article" date="2009" name="Anal. Chem.">
        <title>Lys-N and trypsin cover complementary parts of the phosphoproteome in a refined SCX-based approach.</title>
        <authorList>
            <person name="Gauci S."/>
            <person name="Helbig A.O."/>
            <person name="Slijper M."/>
            <person name="Krijgsveld J."/>
            <person name="Heck A.J."/>
            <person name="Mohammed S."/>
        </authorList>
    </citation>
    <scope>ACETYLATION [LARGE SCALE ANALYSIS] AT ALA-2</scope>
    <scope>CLEAVAGE OF INITIATOR METHIONINE [LARGE SCALE ANALYSIS]</scope>
    <scope>IDENTIFICATION BY MASS SPECTROMETRY [LARGE SCALE ANALYSIS]</scope>
</reference>
<reference key="9">
    <citation type="journal article" date="2009" name="Science">
        <title>Lysine acetylation targets protein complexes and co-regulates major cellular functions.</title>
        <authorList>
            <person name="Choudhary C."/>
            <person name="Kumar C."/>
            <person name="Gnad F."/>
            <person name="Nielsen M.L."/>
            <person name="Rehman M."/>
            <person name="Walther T.C."/>
            <person name="Olsen J.V."/>
            <person name="Mann M."/>
        </authorList>
    </citation>
    <scope>ACETYLATION [LARGE SCALE ANALYSIS] AT LYS-227</scope>
    <scope>IDENTIFICATION BY MASS SPECTROMETRY [LARGE SCALE ANALYSIS]</scope>
</reference>
<reference key="10">
    <citation type="journal article" date="2010" name="Sci. Signal.">
        <title>Quantitative phosphoproteomics reveals widespread full phosphorylation site occupancy during mitosis.</title>
        <authorList>
            <person name="Olsen J.V."/>
            <person name="Vermeulen M."/>
            <person name="Santamaria A."/>
            <person name="Kumar C."/>
            <person name="Miller M.L."/>
            <person name="Jensen L.J."/>
            <person name="Gnad F."/>
            <person name="Cox J."/>
            <person name="Jensen T.S."/>
            <person name="Nigg E.A."/>
            <person name="Brunak S."/>
            <person name="Mann M."/>
        </authorList>
    </citation>
    <scope>PHOSPHORYLATION [LARGE SCALE ANALYSIS] AT SER-448; SER-527; SER-529 AND SER-534</scope>
    <scope>IDENTIFICATION BY MASS SPECTROMETRY [LARGE SCALE ANALYSIS]</scope>
    <source>
        <tissue>Cervix carcinoma</tissue>
    </source>
</reference>
<reference key="11">
    <citation type="journal article" date="2011" name="Sci. Signal.">
        <title>System-wide temporal characterization of the proteome and phosphoproteome of human embryonic stem cell differentiation.</title>
        <authorList>
            <person name="Rigbolt K.T."/>
            <person name="Prokhorova T.A."/>
            <person name="Akimov V."/>
            <person name="Henningsen J."/>
            <person name="Johansen P.T."/>
            <person name="Kratchmarova I."/>
            <person name="Kassem M."/>
            <person name="Mann M."/>
            <person name="Olsen J.V."/>
            <person name="Blagoev B."/>
        </authorList>
    </citation>
    <scope>PHOSPHORYLATION [LARGE SCALE ANALYSIS] AT SER-320; SER-473; SER-475; SER-481; SER-527 AND SER-529</scope>
    <scope>IDENTIFICATION BY MASS SPECTROMETRY [LARGE SCALE ANALYSIS]</scope>
</reference>
<reference key="12">
    <citation type="journal article" date="2013" name="J. Proteome Res.">
        <title>Toward a comprehensive characterization of a human cancer cell phosphoproteome.</title>
        <authorList>
            <person name="Zhou H."/>
            <person name="Di Palma S."/>
            <person name="Preisinger C."/>
            <person name="Peng M."/>
            <person name="Polat A.N."/>
            <person name="Heck A.J."/>
            <person name="Mohammed S."/>
        </authorList>
    </citation>
    <scope>PHOSPHORYLATION [LARGE SCALE ANALYSIS] AT SER-288; SER-290; SER-318; SER-320; SER-527 AND SER-529</scope>
    <scope>IDENTIFICATION BY MASS SPECTROMETRY [LARGE SCALE ANALYSIS]</scope>
    <source>
        <tissue>Cervix carcinoma</tissue>
        <tissue>Erythroleukemia</tissue>
    </source>
</reference>
<proteinExistence type="evidence at protein level"/>
<sequence>MANNSPALTGNSQPQHQAAAAAAQQQQQCGGGGATKPAVSGKQGNVLPLWGNEKTMNLNPMILTNILSSPYFKVQLYELKTYHEVVDEIYFKVTHVEPWEKGSRKTAGQTGMCGGVRGVGTGGIVSTAFCLLYKLFTLKLTRKQVMGLITHTDSPYIRALGFMYIRYTQPPTDLWDWFESFLDDEEDLDVKAGGGCVMTIGEMLRSFLTKLEWFSTLFPRIPVPVQKNIDQQIKTRPRKIKKDGKEGAEEIDRHVERRRSRSPRRSLSPRRSPRRSRSRSHHREGHGSSSFDRELEREKERQRLEREAKEREKERRRSRSIDRGLERRRSRSRERHRSRSRSRDRKGDRRDRDREREKENERGRRRDRDYDKERGNEREKERERSRERSKEQRSRGEVEEKKHKEDKDDRRHRDDKRDSKKEKKHSRSRSRERKHRSRSRSRNAGKRSRSRSKEKSSKHKNESKEKSNKRSRSGSQGRTDSVEKSKKREHSPSKEKSRKRSRSKERSHKRDHSDSKDQSDKHDRRRSQSIEQESQEKQHKNKDETV</sequence>
<name>PR38B_HUMAN</name>